<gene>
    <name evidence="1" type="primary">rplY</name>
    <name evidence="1" type="synonym">ctc</name>
    <name type="ordered locus">RrIowa_1107</name>
</gene>
<feature type="chain" id="PRO_1000086636" description="Large ribosomal subunit protein bL25">
    <location>
        <begin position="1"/>
        <end position="203"/>
    </location>
</feature>
<comment type="function">
    <text evidence="1">This is one of the proteins that binds to the 5S RNA in the ribosome where it forms part of the central protuberance.</text>
</comment>
<comment type="subunit">
    <text evidence="1">Part of the 50S ribosomal subunit; part of the 5S rRNA/L5/L18/L25 subcomplex. Contacts the 5S rRNA. Binds to the 5S rRNA independently of L5 and L18.</text>
</comment>
<comment type="similarity">
    <text evidence="1">Belongs to the bacterial ribosomal protein bL25 family. CTC subfamily.</text>
</comment>
<keyword id="KW-0687">Ribonucleoprotein</keyword>
<keyword id="KW-0689">Ribosomal protein</keyword>
<keyword id="KW-0694">RNA-binding</keyword>
<keyword id="KW-0699">rRNA-binding</keyword>
<name>RL25_RICRO</name>
<sequence>MSEILELEAESRTEFGTGAARALRRAGRVPAIIYGAGKTPVSISLEEKEITKYYRKPAFISQLINLTIDKKKYKVLPKAVELHPVTDIVRHVDFVFLEKKTQKMEVPVVYEGKERALGVKRGGYFNIVKRRVTLLCDVNNIPRNITIDVTNMPMATSLKSSKIELPKGCSFVTKKEFVLATIIGRRGAKTEAEGEQQAAEAGK</sequence>
<protein>
    <recommendedName>
        <fullName evidence="1">Large ribosomal subunit protein bL25</fullName>
    </recommendedName>
    <alternativeName>
        <fullName evidence="2">50S ribosomal protein L25</fullName>
    </alternativeName>
    <alternativeName>
        <fullName evidence="1">General stress protein CTC</fullName>
    </alternativeName>
</protein>
<evidence type="ECO:0000255" key="1">
    <source>
        <dbReference type="HAMAP-Rule" id="MF_01334"/>
    </source>
</evidence>
<evidence type="ECO:0000305" key="2"/>
<accession>B0BUI7</accession>
<organism>
    <name type="scientific">Rickettsia rickettsii (strain Iowa)</name>
    <dbReference type="NCBI Taxonomy" id="452659"/>
    <lineage>
        <taxon>Bacteria</taxon>
        <taxon>Pseudomonadati</taxon>
        <taxon>Pseudomonadota</taxon>
        <taxon>Alphaproteobacteria</taxon>
        <taxon>Rickettsiales</taxon>
        <taxon>Rickettsiaceae</taxon>
        <taxon>Rickettsieae</taxon>
        <taxon>Rickettsia</taxon>
        <taxon>spotted fever group</taxon>
    </lineage>
</organism>
<dbReference type="EMBL" id="CP000766">
    <property type="protein sequence ID" value="ABY72897.1"/>
    <property type="molecule type" value="Genomic_DNA"/>
</dbReference>
<dbReference type="RefSeq" id="WP_012151090.1">
    <property type="nucleotide sequence ID" value="NC_010263.3"/>
</dbReference>
<dbReference type="SMR" id="B0BUI7"/>
<dbReference type="KEGG" id="rrj:RrIowa_1107"/>
<dbReference type="eggNOG" id="COG1825">
    <property type="taxonomic scope" value="Bacteria"/>
</dbReference>
<dbReference type="HOGENOM" id="CLU_075939_0_0_5"/>
<dbReference type="Proteomes" id="UP000000796">
    <property type="component" value="Chromosome"/>
</dbReference>
<dbReference type="GO" id="GO:0022625">
    <property type="term" value="C:cytosolic large ribosomal subunit"/>
    <property type="evidence" value="ECO:0007669"/>
    <property type="project" value="TreeGrafter"/>
</dbReference>
<dbReference type="GO" id="GO:0008097">
    <property type="term" value="F:5S rRNA binding"/>
    <property type="evidence" value="ECO:0007669"/>
    <property type="project" value="InterPro"/>
</dbReference>
<dbReference type="GO" id="GO:0003735">
    <property type="term" value="F:structural constituent of ribosome"/>
    <property type="evidence" value="ECO:0007669"/>
    <property type="project" value="InterPro"/>
</dbReference>
<dbReference type="GO" id="GO:0006412">
    <property type="term" value="P:translation"/>
    <property type="evidence" value="ECO:0007669"/>
    <property type="project" value="UniProtKB-UniRule"/>
</dbReference>
<dbReference type="CDD" id="cd00495">
    <property type="entry name" value="Ribosomal_L25_TL5_CTC"/>
    <property type="match status" value="1"/>
</dbReference>
<dbReference type="Gene3D" id="2.170.120.20">
    <property type="entry name" value="Ribosomal protein L25, beta domain"/>
    <property type="match status" value="1"/>
</dbReference>
<dbReference type="Gene3D" id="2.40.240.10">
    <property type="entry name" value="Ribosomal Protein L25, Chain P"/>
    <property type="match status" value="1"/>
</dbReference>
<dbReference type="HAMAP" id="MF_01336">
    <property type="entry name" value="Ribosomal_bL25"/>
    <property type="match status" value="1"/>
</dbReference>
<dbReference type="HAMAP" id="MF_01334">
    <property type="entry name" value="Ribosomal_bL25_CTC"/>
    <property type="match status" value="1"/>
</dbReference>
<dbReference type="InterPro" id="IPR020056">
    <property type="entry name" value="Rbsml_bL25/Gln-tRNA_synth_N"/>
</dbReference>
<dbReference type="InterPro" id="IPR011035">
    <property type="entry name" value="Ribosomal_bL25/Gln-tRNA_synth"/>
</dbReference>
<dbReference type="InterPro" id="IPR020057">
    <property type="entry name" value="Ribosomal_bL25_b-dom"/>
</dbReference>
<dbReference type="InterPro" id="IPR037121">
    <property type="entry name" value="Ribosomal_bL25_C"/>
</dbReference>
<dbReference type="InterPro" id="IPR001021">
    <property type="entry name" value="Ribosomal_bL25_long"/>
</dbReference>
<dbReference type="InterPro" id="IPR020055">
    <property type="entry name" value="Ribosomal_bL25_short"/>
</dbReference>
<dbReference type="InterPro" id="IPR029751">
    <property type="entry name" value="Ribosomal_L25_dom"/>
</dbReference>
<dbReference type="InterPro" id="IPR020930">
    <property type="entry name" value="Ribosomal_uL5_bac-type"/>
</dbReference>
<dbReference type="NCBIfam" id="TIGR00731">
    <property type="entry name" value="bL25_bact_ctc"/>
    <property type="match status" value="1"/>
</dbReference>
<dbReference type="NCBIfam" id="NF004128">
    <property type="entry name" value="PRK05618.1-2"/>
    <property type="match status" value="1"/>
</dbReference>
<dbReference type="NCBIfam" id="NF004612">
    <property type="entry name" value="PRK05943.1"/>
    <property type="match status" value="1"/>
</dbReference>
<dbReference type="PANTHER" id="PTHR33284">
    <property type="entry name" value="RIBOSOMAL PROTEIN L25/GLN-TRNA SYNTHETASE, ANTI-CODON-BINDING DOMAIN-CONTAINING PROTEIN"/>
    <property type="match status" value="1"/>
</dbReference>
<dbReference type="PANTHER" id="PTHR33284:SF1">
    <property type="entry name" value="RIBOSOMAL PROTEIN L25_GLN-TRNA SYNTHETASE, ANTI-CODON-BINDING DOMAIN-CONTAINING PROTEIN"/>
    <property type="match status" value="1"/>
</dbReference>
<dbReference type="Pfam" id="PF01386">
    <property type="entry name" value="Ribosomal_L25p"/>
    <property type="match status" value="1"/>
</dbReference>
<dbReference type="Pfam" id="PF14693">
    <property type="entry name" value="Ribosomal_TL5_C"/>
    <property type="match status" value="1"/>
</dbReference>
<dbReference type="SUPFAM" id="SSF50715">
    <property type="entry name" value="Ribosomal protein L25-like"/>
    <property type="match status" value="1"/>
</dbReference>
<proteinExistence type="inferred from homology"/>
<reference key="1">
    <citation type="journal article" date="2008" name="Infect. Immun.">
        <title>Genomic comparison of virulent Rickettsia rickettsii Sheila Smith and avirulent Rickettsia rickettsii Iowa.</title>
        <authorList>
            <person name="Ellison D.W."/>
            <person name="Clark T.R."/>
            <person name="Sturdevant D.E."/>
            <person name="Virtaneva K."/>
            <person name="Porcella S.F."/>
            <person name="Hackstadt T."/>
        </authorList>
    </citation>
    <scope>NUCLEOTIDE SEQUENCE [LARGE SCALE GENOMIC DNA]</scope>
    <source>
        <strain>Iowa</strain>
    </source>
</reference>